<organism>
    <name type="scientific">Saccharolobus solfataricus (strain ATCC 35092 / DSM 1617 / JCM 11322 / P2)</name>
    <name type="common">Sulfolobus solfataricus</name>
    <dbReference type="NCBI Taxonomy" id="273057"/>
    <lineage>
        <taxon>Archaea</taxon>
        <taxon>Thermoproteota</taxon>
        <taxon>Thermoprotei</taxon>
        <taxon>Sulfolobales</taxon>
        <taxon>Sulfolobaceae</taxon>
        <taxon>Saccharolobus</taxon>
    </lineage>
</organism>
<evidence type="ECO:0000250" key="1"/>
<evidence type="ECO:0000305" key="2"/>
<keyword id="KW-0028">Amino-acid biosynthesis</keyword>
<keyword id="KW-0100">Branched-chain amino acid biosynthesis</keyword>
<keyword id="KW-0963">Cytoplasm</keyword>
<keyword id="KW-0432">Leucine biosynthesis</keyword>
<keyword id="KW-0460">Magnesium</keyword>
<keyword id="KW-0464">Manganese</keyword>
<keyword id="KW-0479">Metal-binding</keyword>
<keyword id="KW-0520">NAD</keyword>
<keyword id="KW-0560">Oxidoreductase</keyword>
<keyword id="KW-1185">Reference proteome</keyword>
<feature type="chain" id="PRO_0000083811" description="3-isopropylmalate dehydrogenase">
    <location>
        <begin position="1"/>
        <end position="336"/>
    </location>
</feature>
<feature type="binding site" evidence="1">
    <location>
        <position position="86"/>
    </location>
    <ligand>
        <name>substrate</name>
    </ligand>
</feature>
<feature type="binding site" evidence="1">
    <location>
        <position position="96"/>
    </location>
    <ligand>
        <name>substrate</name>
    </ligand>
</feature>
<feature type="binding site" evidence="1">
    <location>
        <position position="117"/>
    </location>
    <ligand>
        <name>substrate</name>
    </ligand>
</feature>
<feature type="binding site" evidence="1">
    <location>
        <position position="201"/>
    </location>
    <ligand>
        <name>Mg(2+)</name>
        <dbReference type="ChEBI" id="CHEBI:18420"/>
    </ligand>
</feature>
<feature type="binding site" evidence="1">
    <location>
        <position position="201"/>
    </location>
    <ligand>
        <name>substrate</name>
    </ligand>
</feature>
<feature type="binding site" evidence="1">
    <location>
        <position position="225"/>
    </location>
    <ligand>
        <name>Mg(2+)</name>
        <dbReference type="ChEBI" id="CHEBI:18420"/>
    </ligand>
</feature>
<feature type="binding site" evidence="1">
    <location>
        <position position="229"/>
    </location>
    <ligand>
        <name>Mg(2+)</name>
        <dbReference type="ChEBI" id="CHEBI:18420"/>
    </ligand>
</feature>
<feature type="binding site" evidence="1">
    <location>
        <begin position="258"/>
        <end position="270"/>
    </location>
    <ligand>
        <name>NAD(+)</name>
        <dbReference type="ChEBI" id="CHEBI:57540"/>
    </ligand>
</feature>
<feature type="site" description="Important for catalysis" evidence="1">
    <location>
        <position position="124"/>
    </location>
</feature>
<feature type="site" description="Important for catalysis" evidence="1">
    <location>
        <position position="170"/>
    </location>
</feature>
<name>LEU3_SACS2</name>
<gene>
    <name type="primary">leuB</name>
    <name type="ordered locus">SSO0723</name>
    <name type="ORF">C10_007</name>
</gene>
<accession>Q9UXB2</accession>
<comment type="function">
    <text evidence="1">Catalyzes the oxidation of 3-carboxy-2-hydroxy-4-methylpentanoate (3-isopropylmalate) to 3-carboxy-4-methyl-2-oxopentanoate. The product decarboxylates to 4-methyl-2 oxopentanoate (By similarity).</text>
</comment>
<comment type="catalytic activity">
    <reaction>
        <text>(2R,3S)-3-isopropylmalate + NAD(+) = 4-methyl-2-oxopentanoate + CO2 + NADH</text>
        <dbReference type="Rhea" id="RHEA:32271"/>
        <dbReference type="ChEBI" id="CHEBI:16526"/>
        <dbReference type="ChEBI" id="CHEBI:17865"/>
        <dbReference type="ChEBI" id="CHEBI:35121"/>
        <dbReference type="ChEBI" id="CHEBI:57540"/>
        <dbReference type="ChEBI" id="CHEBI:57945"/>
        <dbReference type="EC" id="1.1.1.85"/>
    </reaction>
</comment>
<comment type="cofactor">
    <cofactor evidence="1">
        <name>Mg(2+)</name>
        <dbReference type="ChEBI" id="CHEBI:18420"/>
    </cofactor>
    <cofactor evidence="1">
        <name>Mn(2+)</name>
        <dbReference type="ChEBI" id="CHEBI:29035"/>
    </cofactor>
    <text evidence="1">Binds 1 Mg(2+) or Mn(2+) ion per subunit.</text>
</comment>
<comment type="pathway">
    <text>Amino-acid biosynthesis; L-leucine biosynthesis; L-leucine from 3-methyl-2-oxobutanoate: step 3/4.</text>
</comment>
<comment type="subunit">
    <text evidence="1">Homotetramer.</text>
</comment>
<comment type="subcellular location">
    <subcellularLocation>
        <location evidence="1">Cytoplasm</location>
    </subcellularLocation>
</comment>
<comment type="similarity">
    <text evidence="2">Belongs to the isocitrate and isopropylmalate dehydrogenases family.</text>
</comment>
<dbReference type="EC" id="1.1.1.85"/>
<dbReference type="EMBL" id="Y18930">
    <property type="protein sequence ID" value="CAB57580.1"/>
    <property type="molecule type" value="Genomic_DNA"/>
</dbReference>
<dbReference type="EMBL" id="AE006641">
    <property type="protein sequence ID" value="AAK41021.1"/>
    <property type="molecule type" value="Genomic_DNA"/>
</dbReference>
<dbReference type="PIR" id="F90220">
    <property type="entry name" value="F90220"/>
</dbReference>
<dbReference type="RefSeq" id="WP_009991286.1">
    <property type="nucleotide sequence ID" value="NC_002754.1"/>
</dbReference>
<dbReference type="SMR" id="Q9UXB2"/>
<dbReference type="FunCoup" id="Q9UXB2">
    <property type="interactions" value="294"/>
</dbReference>
<dbReference type="STRING" id="273057.SSO0723"/>
<dbReference type="PaxDb" id="273057-SSO0723"/>
<dbReference type="EnsemblBacteria" id="AAK41021">
    <property type="protein sequence ID" value="AAK41021"/>
    <property type="gene ID" value="SSO0723"/>
</dbReference>
<dbReference type="KEGG" id="sso:SSO0723"/>
<dbReference type="PATRIC" id="fig|273057.12.peg.721"/>
<dbReference type="eggNOG" id="arCOG01163">
    <property type="taxonomic scope" value="Archaea"/>
</dbReference>
<dbReference type="HOGENOM" id="CLU_031953_0_1_2"/>
<dbReference type="InParanoid" id="Q9UXB2"/>
<dbReference type="PhylomeDB" id="Q9UXB2"/>
<dbReference type="UniPathway" id="UPA00048">
    <property type="reaction ID" value="UER00072"/>
</dbReference>
<dbReference type="Proteomes" id="UP000001974">
    <property type="component" value="Chromosome"/>
</dbReference>
<dbReference type="GO" id="GO:0005737">
    <property type="term" value="C:cytoplasm"/>
    <property type="evidence" value="ECO:0007669"/>
    <property type="project" value="UniProtKB-SubCell"/>
</dbReference>
<dbReference type="GO" id="GO:0003862">
    <property type="term" value="F:3-isopropylmalate dehydrogenase activity"/>
    <property type="evidence" value="ECO:0007669"/>
    <property type="project" value="UniProtKB-EC"/>
</dbReference>
<dbReference type="GO" id="GO:0004449">
    <property type="term" value="F:isocitrate dehydrogenase (NAD+) activity"/>
    <property type="evidence" value="ECO:0000318"/>
    <property type="project" value="GO_Central"/>
</dbReference>
<dbReference type="GO" id="GO:0000287">
    <property type="term" value="F:magnesium ion binding"/>
    <property type="evidence" value="ECO:0007669"/>
    <property type="project" value="InterPro"/>
</dbReference>
<dbReference type="GO" id="GO:0051287">
    <property type="term" value="F:NAD binding"/>
    <property type="evidence" value="ECO:0007669"/>
    <property type="project" value="InterPro"/>
</dbReference>
<dbReference type="GO" id="GO:0006102">
    <property type="term" value="P:isocitrate metabolic process"/>
    <property type="evidence" value="ECO:0000318"/>
    <property type="project" value="GO_Central"/>
</dbReference>
<dbReference type="GO" id="GO:0009098">
    <property type="term" value="P:L-leucine biosynthetic process"/>
    <property type="evidence" value="ECO:0007669"/>
    <property type="project" value="UniProtKB-UniPathway"/>
</dbReference>
<dbReference type="FunFam" id="3.40.718.10:FF:000019">
    <property type="entry name" value="Homoisocitrate dehydrogenase"/>
    <property type="match status" value="1"/>
</dbReference>
<dbReference type="Gene3D" id="3.40.718.10">
    <property type="entry name" value="Isopropylmalate Dehydrogenase"/>
    <property type="match status" value="1"/>
</dbReference>
<dbReference type="InterPro" id="IPR019818">
    <property type="entry name" value="IsoCit/isopropylmalate_DH_CS"/>
</dbReference>
<dbReference type="InterPro" id="IPR024084">
    <property type="entry name" value="IsoPropMal-DH-like_dom"/>
</dbReference>
<dbReference type="InterPro" id="IPR011828">
    <property type="entry name" value="LEU3_arc"/>
</dbReference>
<dbReference type="NCBIfam" id="TIGR02088">
    <property type="entry name" value="LEU3_arch"/>
    <property type="match status" value="1"/>
</dbReference>
<dbReference type="PANTHER" id="PTHR11835">
    <property type="entry name" value="DECARBOXYLATING DEHYDROGENASES-ISOCITRATE, ISOPROPYLMALATE, TARTRATE"/>
    <property type="match status" value="1"/>
</dbReference>
<dbReference type="PANTHER" id="PTHR11835:SF34">
    <property type="entry name" value="ISOCITRATE DEHYDROGENASE [NAD] SUBUNIT ALPHA, MITOCHONDRIAL"/>
    <property type="match status" value="1"/>
</dbReference>
<dbReference type="Pfam" id="PF00180">
    <property type="entry name" value="Iso_dh"/>
    <property type="match status" value="1"/>
</dbReference>
<dbReference type="SMART" id="SM01329">
    <property type="entry name" value="Iso_dh"/>
    <property type="match status" value="1"/>
</dbReference>
<dbReference type="SUPFAM" id="SSF53659">
    <property type="entry name" value="Isocitrate/Isopropylmalate dehydrogenase-like"/>
    <property type="match status" value="1"/>
</dbReference>
<dbReference type="PROSITE" id="PS00470">
    <property type="entry name" value="IDH_IMDH"/>
    <property type="match status" value="1"/>
</dbReference>
<proteinExistence type="inferred from homology"/>
<sequence>MTFRVAVIPGDGIGPELYEGSKRIIAKLIEKYNLDIDLIEVEAGDVALNKYGEALPRHTLDVIEKADMILKGPVGETAMDVVVKLRQMYDMYANIRPAKSLPNVQSKYPNVDLVIVRENTEDLYKGFEFVTSTGVTIAIKVTTEFASKRIVNVALNYALMRRRKVTCVHKANVMRVTDGLFASVCREILKGKVNFEEMYVDAAAANLVRDPTRFDVIVTSNVYGDILSDEASQIAGSLGLAPSANIGDRKSMFEPVHGAAFDIAGKGIANPTAFLLSVSMMLSRMYELSKENKYILASKSLENAIIETYKSGNKLTEDVGGSAKLKDMVDEIYKYM</sequence>
<reference key="1">
    <citation type="journal article" date="2000" name="Genome">
        <title>Gene content and organization of a 281-kbp contig from the genome of the extremely thermophilic archaeon, Sulfolobus solfataricus P2.</title>
        <authorList>
            <person name="Charlebois R.L."/>
            <person name="Singh R.K."/>
            <person name="Chan-Weiher C.C.-Y."/>
            <person name="Allard G."/>
            <person name="Chow C."/>
            <person name="Confalonieri F."/>
            <person name="Curtis B."/>
            <person name="Duguet M."/>
            <person name="Erauso G."/>
            <person name="Faguy D."/>
            <person name="Gaasterland T."/>
            <person name="Garrett R.A."/>
            <person name="Gordon P."/>
            <person name="Jeffries A.C."/>
            <person name="Kozera C."/>
            <person name="Kushwaha N."/>
            <person name="Lafleur E."/>
            <person name="Medina N."/>
            <person name="Peng X."/>
            <person name="Penny S.L."/>
            <person name="She Q."/>
            <person name="St Jean A."/>
            <person name="van der Oost J."/>
            <person name="Young F."/>
            <person name="Zivanovic Y."/>
            <person name="Doolittle W.F."/>
            <person name="Ragan M.A."/>
            <person name="Sensen C.W."/>
        </authorList>
    </citation>
    <scope>NUCLEOTIDE SEQUENCE [LARGE SCALE GENOMIC DNA]</scope>
    <source>
        <strain>ATCC 35092 / DSM 1617 / JCM 11322 / P2</strain>
    </source>
</reference>
<reference key="2">
    <citation type="journal article" date="2001" name="Proc. Natl. Acad. Sci. U.S.A.">
        <title>The complete genome of the crenarchaeon Sulfolobus solfataricus P2.</title>
        <authorList>
            <person name="She Q."/>
            <person name="Singh R.K."/>
            <person name="Confalonieri F."/>
            <person name="Zivanovic Y."/>
            <person name="Allard G."/>
            <person name="Awayez M.J."/>
            <person name="Chan-Weiher C.C.-Y."/>
            <person name="Clausen I.G."/>
            <person name="Curtis B.A."/>
            <person name="De Moors A."/>
            <person name="Erauso G."/>
            <person name="Fletcher C."/>
            <person name="Gordon P.M.K."/>
            <person name="Heikamp-de Jong I."/>
            <person name="Jeffries A.C."/>
            <person name="Kozera C.J."/>
            <person name="Medina N."/>
            <person name="Peng X."/>
            <person name="Thi-Ngoc H.P."/>
            <person name="Redder P."/>
            <person name="Schenk M.E."/>
            <person name="Theriault C."/>
            <person name="Tolstrup N."/>
            <person name="Charlebois R.L."/>
            <person name="Doolittle W.F."/>
            <person name="Duguet M."/>
            <person name="Gaasterland T."/>
            <person name="Garrett R.A."/>
            <person name="Ragan M.A."/>
            <person name="Sensen C.W."/>
            <person name="Van der Oost J."/>
        </authorList>
    </citation>
    <scope>NUCLEOTIDE SEQUENCE [LARGE SCALE GENOMIC DNA]</scope>
    <source>
        <strain>ATCC 35092 / DSM 1617 / JCM 11322 / P2</strain>
    </source>
</reference>
<protein>
    <recommendedName>
        <fullName>3-isopropylmalate dehydrogenase</fullName>
        <shortName>3-IPM-DH</shortName>
        <shortName>IMDH</shortName>
        <ecNumber>1.1.1.85</ecNumber>
    </recommendedName>
    <alternativeName>
        <fullName>Beta-IPM dehydrogenase</fullName>
    </alternativeName>
</protein>